<evidence type="ECO:0000255" key="1">
    <source>
        <dbReference type="HAMAP-Rule" id="MF_04067"/>
    </source>
</evidence>
<proteinExistence type="inferred from homology"/>
<gene>
    <name evidence="1" type="primary">NS</name>
</gene>
<keyword id="KW-0025">Alternative splicing</keyword>
<keyword id="KW-1048">Host nucleus</keyword>
<keyword id="KW-0945">Host-virus interaction</keyword>
<keyword id="KW-0813">Transport</keyword>
<keyword id="KW-0946">Virion</keyword>
<name>NEP_I73A5</name>
<sequence length="121" mass="14365">MDSNTVSSFQDILLRMSKMQLGSSSEDLNGMITQFESLKLYRDSLGEAVMRMGDLHLLQNRNGKWREQLGQKFEEIRWLIEEVRHRLKTTENSFEQITFMQALQLLFEVEQEIRTFSFQLI</sequence>
<protein>
    <recommendedName>
        <fullName evidence="1">Nuclear export protein</fullName>
        <shortName evidence="1">NEP</shortName>
    </recommendedName>
    <alternativeName>
        <fullName evidence="1">Non-structural protein 2</fullName>
        <shortName evidence="1">NS2</shortName>
    </alternativeName>
</protein>
<feature type="chain" id="PRO_0000324211" description="Nuclear export protein">
    <location>
        <begin position="1"/>
        <end position="121"/>
    </location>
</feature>
<feature type="short sequence motif" description="Nuclear export signal" evidence="1">
    <location>
        <begin position="12"/>
        <end position="21"/>
    </location>
</feature>
<feature type="short sequence motif" description="Nuclear export signal" evidence="1">
    <location>
        <begin position="85"/>
        <end position="94"/>
    </location>
</feature>
<organismHost>
    <name type="scientific">Aves</name>
    <dbReference type="NCBI Taxonomy" id="8782"/>
</organismHost>
<organismHost>
    <name type="scientific">Cetacea</name>
    <name type="common">whales</name>
    <dbReference type="NCBI Taxonomy" id="9721"/>
</organismHost>
<organismHost>
    <name type="scientific">Homo sapiens</name>
    <name type="common">Human</name>
    <dbReference type="NCBI Taxonomy" id="9606"/>
</organismHost>
<organismHost>
    <name type="scientific">Phocidae</name>
    <name type="common">true seals</name>
    <dbReference type="NCBI Taxonomy" id="9709"/>
</organismHost>
<organismHost>
    <name type="scientific">Sus scrofa</name>
    <name type="common">Pig</name>
    <dbReference type="NCBI Taxonomy" id="9823"/>
</organismHost>
<reference key="1">
    <citation type="submission" date="2006-04" db="EMBL/GenBank/DDBJ databases">
        <title>The NIAID influenza genome sequencing project.</title>
        <authorList>
            <person name="Spiro D."/>
            <person name="Ghedin E."/>
            <person name="Sengamalay N."/>
            <person name="Halpin R."/>
            <person name="Boyne A."/>
            <person name="Zaborsky J."/>
            <person name="Feldblyum T."/>
            <person name="Subbu V."/>
            <person name="Sparenborg J."/>
            <person name="Shumway M."/>
            <person name="Sitz J."/>
            <person name="Katzel D."/>
            <person name="Koo H."/>
            <person name="Salzberg S.L."/>
            <person name="Griesemer S."/>
            <person name="St George K."/>
            <person name="Bennett R."/>
            <person name="Taylor J."/>
            <person name="Bennink J.R."/>
            <person name="Yewdell J.W."/>
            <person name="Bao Y."/>
            <person name="Bolotov P."/>
            <person name="Dernovoy D."/>
            <person name="Kiryutin B."/>
            <person name="Lipman D.J."/>
            <person name="Tatusova T."/>
        </authorList>
    </citation>
    <scope>NUCLEOTIDE SEQUENCE [GENOMIC RNA]</scope>
</reference>
<comment type="function">
    <text evidence="1">Mediates the nuclear export of encapsidated genomic RNAs (ribonucleoproteins, RNPs). Acts as an adapter between viral RNPs complexes and the nuclear export machinery of the cell. Possesses no intrinsic RNA-binding activity, but includes a C-terminal M1-binding domain. This domain is believed to allow recognition of RNPs bound to the protein M1. Since protein M1 is not available in large quantities before late stages of infection, such an indirect recognition mechanism probably ensures that genomic RNPs are not exported from the host nucleus until sufficient quantities of viral mRNA and progeny genomic RNA have been synthesized. Furthermore, the RNPs enter the host cytoplasm only when associated with the M1 protein that is necessary to guide them to the plasma membrane. May down-regulate viral RNA synthesis when overproduced.</text>
</comment>
<comment type="subunit">
    <text evidence="1">Interacts with protein M1. May interact with host nucleoporin RAB/HRB and exportin XPO1/CRM1.</text>
</comment>
<comment type="subcellular location">
    <subcellularLocation>
        <location evidence="1">Virion</location>
    </subcellularLocation>
    <subcellularLocation>
        <location evidence="1">Host nucleus</location>
    </subcellularLocation>
</comment>
<comment type="alternative products">
    <event type="alternative splicing"/>
    <isoform>
        <id>Q1PUD4-1</id>
        <name>NEP</name>
        <name>NS2</name>
        <sequence type="displayed"/>
    </isoform>
    <isoform>
        <id>Q1PUD3-1</id>
        <name>NS1</name>
        <sequence type="external"/>
    </isoform>
</comment>
<comment type="similarity">
    <text evidence="1">Belongs to the influenza viruses NEP family.</text>
</comment>
<organism>
    <name type="scientific">Influenza A virus (strain A/Port Chalmers/1/1973 H3N2)</name>
    <dbReference type="NCBI Taxonomy" id="385624"/>
    <lineage>
        <taxon>Viruses</taxon>
        <taxon>Riboviria</taxon>
        <taxon>Orthornavirae</taxon>
        <taxon>Negarnaviricota</taxon>
        <taxon>Polyploviricotina</taxon>
        <taxon>Insthoviricetes</taxon>
        <taxon>Articulavirales</taxon>
        <taxon>Orthomyxoviridae</taxon>
        <taxon>Alphainfluenzavirus</taxon>
        <taxon>Alphainfluenzavirus influenzae</taxon>
        <taxon>Influenza A virus</taxon>
    </lineage>
</organism>
<dbReference type="EMBL" id="CY009352">
    <property type="protein sequence ID" value="ABE12563.1"/>
    <property type="molecule type" value="Genomic_RNA"/>
</dbReference>
<dbReference type="SMR" id="Q1PUD4"/>
<dbReference type="Proteomes" id="UP000133870">
    <property type="component" value="Genome"/>
</dbReference>
<dbReference type="GO" id="GO:0042025">
    <property type="term" value="C:host cell nucleus"/>
    <property type="evidence" value="ECO:0007669"/>
    <property type="project" value="UniProtKB-SubCell"/>
</dbReference>
<dbReference type="GO" id="GO:0044423">
    <property type="term" value="C:virion component"/>
    <property type="evidence" value="ECO:0007669"/>
    <property type="project" value="UniProtKB-UniRule"/>
</dbReference>
<dbReference type="GO" id="GO:0039675">
    <property type="term" value="P:exit of virus from host cell nucleus through nuclear pore"/>
    <property type="evidence" value="ECO:0007669"/>
    <property type="project" value="UniProtKB-UniRule"/>
</dbReference>
<dbReference type="Gene3D" id="1.10.287.230">
    <property type="match status" value="1"/>
</dbReference>
<dbReference type="Gene3D" id="1.10.287.10">
    <property type="entry name" value="S15/NS1, RNA-binding"/>
    <property type="match status" value="1"/>
</dbReference>
<dbReference type="HAMAP" id="MF_04067">
    <property type="entry name" value="INFV_NEP"/>
    <property type="match status" value="1"/>
</dbReference>
<dbReference type="InterPro" id="IPR000968">
    <property type="entry name" value="Flu_NS2"/>
</dbReference>
<dbReference type="Pfam" id="PF00601">
    <property type="entry name" value="Flu_NS2"/>
    <property type="match status" value="1"/>
</dbReference>
<dbReference type="SUPFAM" id="SSF101156">
    <property type="entry name" value="Nonstructural protein ns2, Nep, M1-binding domain"/>
    <property type="match status" value="1"/>
</dbReference>
<accession>Q1PUD4</accession>